<name>FABZ_MAGMM</name>
<feature type="chain" id="PRO_0000340785" description="3-hydroxyacyl-[acyl-carrier-protein] dehydratase FabZ">
    <location>
        <begin position="1"/>
        <end position="153"/>
    </location>
</feature>
<feature type="active site" evidence="1">
    <location>
        <position position="52"/>
    </location>
</feature>
<organism>
    <name type="scientific">Magnetococcus marinus (strain ATCC BAA-1437 / JCM 17883 / MC-1)</name>
    <dbReference type="NCBI Taxonomy" id="156889"/>
    <lineage>
        <taxon>Bacteria</taxon>
        <taxon>Pseudomonadati</taxon>
        <taxon>Pseudomonadota</taxon>
        <taxon>Alphaproteobacteria</taxon>
        <taxon>Magnetococcales</taxon>
        <taxon>Magnetococcaceae</taxon>
        <taxon>Magnetococcus</taxon>
    </lineage>
</organism>
<sequence length="153" mass="17458">MSTDPISLQEIMSFLPHRYPFLLIDRIVEVEQGKRILAIKNVSFNEPHFQGHFPDHPVMPGVLILEAMAQAGALLAGYTDPDSVRGQLVYFMAIDKARFRKPVLPGHQLNIEMTLLKRRREVWRFGGKAMVDGEVACEAEVMAMTRKREESHE</sequence>
<protein>
    <recommendedName>
        <fullName evidence="1">3-hydroxyacyl-[acyl-carrier-protein] dehydratase FabZ</fullName>
        <ecNumber evidence="1">4.2.1.59</ecNumber>
    </recommendedName>
    <alternativeName>
        <fullName evidence="1">(3R)-hydroxymyristoyl-[acyl-carrier-protein] dehydratase</fullName>
        <shortName evidence="1">(3R)-hydroxymyristoyl-ACP dehydrase</shortName>
    </alternativeName>
    <alternativeName>
        <fullName evidence="1">Beta-hydroxyacyl-ACP dehydratase</fullName>
    </alternativeName>
</protein>
<reference key="1">
    <citation type="journal article" date="2009" name="Appl. Environ. Microbiol.">
        <title>Complete genome sequence of the chemolithoautotrophic marine magnetotactic coccus strain MC-1.</title>
        <authorList>
            <person name="Schubbe S."/>
            <person name="Williams T.J."/>
            <person name="Xie G."/>
            <person name="Kiss H.E."/>
            <person name="Brettin T.S."/>
            <person name="Martinez D."/>
            <person name="Ross C.A."/>
            <person name="Schuler D."/>
            <person name="Cox B.L."/>
            <person name="Nealson K.H."/>
            <person name="Bazylinski D.A."/>
        </authorList>
    </citation>
    <scope>NUCLEOTIDE SEQUENCE [LARGE SCALE GENOMIC DNA]</scope>
    <source>
        <strain>ATCC BAA-1437 / JCM 17883 / MC-1</strain>
    </source>
</reference>
<evidence type="ECO:0000255" key="1">
    <source>
        <dbReference type="HAMAP-Rule" id="MF_00406"/>
    </source>
</evidence>
<proteinExistence type="inferred from homology"/>
<comment type="function">
    <text evidence="1">Involved in unsaturated fatty acids biosynthesis. Catalyzes the dehydration of short chain beta-hydroxyacyl-ACPs and long chain saturated and unsaturated beta-hydroxyacyl-ACPs.</text>
</comment>
<comment type="catalytic activity">
    <reaction evidence="1">
        <text>a (3R)-hydroxyacyl-[ACP] = a (2E)-enoyl-[ACP] + H2O</text>
        <dbReference type="Rhea" id="RHEA:13097"/>
        <dbReference type="Rhea" id="RHEA-COMP:9925"/>
        <dbReference type="Rhea" id="RHEA-COMP:9945"/>
        <dbReference type="ChEBI" id="CHEBI:15377"/>
        <dbReference type="ChEBI" id="CHEBI:78784"/>
        <dbReference type="ChEBI" id="CHEBI:78827"/>
        <dbReference type="EC" id="4.2.1.59"/>
    </reaction>
</comment>
<comment type="subcellular location">
    <subcellularLocation>
        <location evidence="1">Cytoplasm</location>
    </subcellularLocation>
</comment>
<comment type="similarity">
    <text evidence="1">Belongs to the thioester dehydratase family. FabZ subfamily.</text>
</comment>
<accession>A0L8R5</accession>
<gene>
    <name evidence="1" type="primary">fabZ</name>
    <name type="ordered locus">Mmc1_1850</name>
</gene>
<keyword id="KW-0963">Cytoplasm</keyword>
<keyword id="KW-0441">Lipid A biosynthesis</keyword>
<keyword id="KW-0444">Lipid biosynthesis</keyword>
<keyword id="KW-0443">Lipid metabolism</keyword>
<keyword id="KW-0456">Lyase</keyword>
<keyword id="KW-1185">Reference proteome</keyword>
<dbReference type="EC" id="4.2.1.59" evidence="1"/>
<dbReference type="EMBL" id="CP000471">
    <property type="protein sequence ID" value="ABK44358.1"/>
    <property type="molecule type" value="Genomic_DNA"/>
</dbReference>
<dbReference type="RefSeq" id="WP_011713502.1">
    <property type="nucleotide sequence ID" value="NC_008576.1"/>
</dbReference>
<dbReference type="SMR" id="A0L8R5"/>
<dbReference type="STRING" id="156889.Mmc1_1850"/>
<dbReference type="KEGG" id="mgm:Mmc1_1850"/>
<dbReference type="eggNOG" id="COG0764">
    <property type="taxonomic scope" value="Bacteria"/>
</dbReference>
<dbReference type="HOGENOM" id="CLU_078912_1_0_5"/>
<dbReference type="OrthoDB" id="9772788at2"/>
<dbReference type="Proteomes" id="UP000002586">
    <property type="component" value="Chromosome"/>
</dbReference>
<dbReference type="GO" id="GO:0005737">
    <property type="term" value="C:cytoplasm"/>
    <property type="evidence" value="ECO:0007669"/>
    <property type="project" value="UniProtKB-SubCell"/>
</dbReference>
<dbReference type="GO" id="GO:0016020">
    <property type="term" value="C:membrane"/>
    <property type="evidence" value="ECO:0007669"/>
    <property type="project" value="GOC"/>
</dbReference>
<dbReference type="GO" id="GO:0019171">
    <property type="term" value="F:(3R)-hydroxyacyl-[acyl-carrier-protein] dehydratase activity"/>
    <property type="evidence" value="ECO:0007669"/>
    <property type="project" value="UniProtKB-EC"/>
</dbReference>
<dbReference type="GO" id="GO:0006633">
    <property type="term" value="P:fatty acid biosynthetic process"/>
    <property type="evidence" value="ECO:0007669"/>
    <property type="project" value="UniProtKB-UniRule"/>
</dbReference>
<dbReference type="GO" id="GO:0009245">
    <property type="term" value="P:lipid A biosynthetic process"/>
    <property type="evidence" value="ECO:0007669"/>
    <property type="project" value="UniProtKB-UniRule"/>
</dbReference>
<dbReference type="CDD" id="cd01288">
    <property type="entry name" value="FabZ"/>
    <property type="match status" value="1"/>
</dbReference>
<dbReference type="FunFam" id="3.10.129.10:FF:000001">
    <property type="entry name" value="3-hydroxyacyl-[acyl-carrier-protein] dehydratase FabZ"/>
    <property type="match status" value="1"/>
</dbReference>
<dbReference type="Gene3D" id="3.10.129.10">
    <property type="entry name" value="Hotdog Thioesterase"/>
    <property type="match status" value="1"/>
</dbReference>
<dbReference type="HAMAP" id="MF_00406">
    <property type="entry name" value="FabZ"/>
    <property type="match status" value="1"/>
</dbReference>
<dbReference type="InterPro" id="IPR013114">
    <property type="entry name" value="FabA_FabZ"/>
</dbReference>
<dbReference type="InterPro" id="IPR010084">
    <property type="entry name" value="FabZ"/>
</dbReference>
<dbReference type="InterPro" id="IPR029069">
    <property type="entry name" value="HotDog_dom_sf"/>
</dbReference>
<dbReference type="NCBIfam" id="TIGR01750">
    <property type="entry name" value="fabZ"/>
    <property type="match status" value="1"/>
</dbReference>
<dbReference type="NCBIfam" id="NF000582">
    <property type="entry name" value="PRK00006.1"/>
    <property type="match status" value="1"/>
</dbReference>
<dbReference type="PANTHER" id="PTHR30272">
    <property type="entry name" value="3-HYDROXYACYL-[ACYL-CARRIER-PROTEIN] DEHYDRATASE"/>
    <property type="match status" value="1"/>
</dbReference>
<dbReference type="PANTHER" id="PTHR30272:SF1">
    <property type="entry name" value="3-HYDROXYACYL-[ACYL-CARRIER-PROTEIN] DEHYDRATASE"/>
    <property type="match status" value="1"/>
</dbReference>
<dbReference type="Pfam" id="PF07977">
    <property type="entry name" value="FabA"/>
    <property type="match status" value="1"/>
</dbReference>
<dbReference type="SUPFAM" id="SSF54637">
    <property type="entry name" value="Thioesterase/thiol ester dehydrase-isomerase"/>
    <property type="match status" value="1"/>
</dbReference>